<accession>C1FNT4</accession>
<reference key="1">
    <citation type="submission" date="2008-10" db="EMBL/GenBank/DDBJ databases">
        <title>Genome sequence of Clostridium botulinum A2 Kyoto.</title>
        <authorList>
            <person name="Shrivastava S."/>
            <person name="Brinkac L.M."/>
            <person name="Brown J.L."/>
            <person name="Bruce D."/>
            <person name="Detter C.C."/>
            <person name="Johnson E.A."/>
            <person name="Munk C.A."/>
            <person name="Smith L.A."/>
            <person name="Smith T.J."/>
            <person name="Sutton G."/>
            <person name="Brettin T.S."/>
        </authorList>
    </citation>
    <scope>NUCLEOTIDE SEQUENCE [LARGE SCALE GENOMIC DNA]</scope>
    <source>
        <strain>Kyoto / Type A2</strain>
    </source>
</reference>
<protein>
    <recommendedName>
        <fullName evidence="1">LexA repressor</fullName>
        <ecNumber evidence="1">3.4.21.88</ecNumber>
    </recommendedName>
</protein>
<keyword id="KW-0068">Autocatalytic cleavage</keyword>
<keyword id="KW-0227">DNA damage</keyword>
<keyword id="KW-0234">DNA repair</keyword>
<keyword id="KW-0235">DNA replication</keyword>
<keyword id="KW-0238">DNA-binding</keyword>
<keyword id="KW-0378">Hydrolase</keyword>
<keyword id="KW-0678">Repressor</keyword>
<keyword id="KW-0742">SOS response</keyword>
<keyword id="KW-0804">Transcription</keyword>
<keyword id="KW-0805">Transcription regulation</keyword>
<sequence length="201" mass="22579">MNKSRIDKQNEVYNFIKLQIKEKGYPPSVREICKAVGLSSTSSVHFHLKRLEKEGLIKRDSSKTRAIEIVDPTSKKEVINVPIVGTITAGNPILAIENIEDVFPLPIDYVKNTKDLFMLKVSGESMIEAGILDGDLAIIEKTDSANNGDIVVALIDNEATLKRFFKESSYIRLQPENKSMKPIILENCKVLGRLVGIYRKY</sequence>
<evidence type="ECO:0000255" key="1">
    <source>
        <dbReference type="HAMAP-Rule" id="MF_00015"/>
    </source>
</evidence>
<name>LEXA_CLOBJ</name>
<gene>
    <name evidence="1" type="primary">lexA</name>
    <name type="ordered locus">CLM_1952</name>
</gene>
<comment type="function">
    <text evidence="1">Represses a number of genes involved in the response to DNA damage (SOS response), including recA and lexA. In the presence of single-stranded DNA, RecA interacts with LexA causing an autocatalytic cleavage which disrupts the DNA-binding part of LexA, leading to derepression of the SOS regulon and eventually DNA repair.</text>
</comment>
<comment type="catalytic activity">
    <reaction evidence="1">
        <text>Hydrolysis of Ala-|-Gly bond in repressor LexA.</text>
        <dbReference type="EC" id="3.4.21.88"/>
    </reaction>
</comment>
<comment type="subunit">
    <text evidence="1">Homodimer.</text>
</comment>
<comment type="similarity">
    <text evidence="1">Belongs to the peptidase S24 family.</text>
</comment>
<organism>
    <name type="scientific">Clostridium botulinum (strain Kyoto / Type A2)</name>
    <dbReference type="NCBI Taxonomy" id="536232"/>
    <lineage>
        <taxon>Bacteria</taxon>
        <taxon>Bacillati</taxon>
        <taxon>Bacillota</taxon>
        <taxon>Clostridia</taxon>
        <taxon>Eubacteriales</taxon>
        <taxon>Clostridiaceae</taxon>
        <taxon>Clostridium</taxon>
    </lineage>
</organism>
<dbReference type="EC" id="3.4.21.88" evidence="1"/>
<dbReference type="EMBL" id="CP001581">
    <property type="protein sequence ID" value="ACO83894.1"/>
    <property type="molecule type" value="Genomic_DNA"/>
</dbReference>
<dbReference type="RefSeq" id="WP_003358834.1">
    <property type="nucleotide sequence ID" value="NC_012563.1"/>
</dbReference>
<dbReference type="SMR" id="C1FNT4"/>
<dbReference type="MEROPS" id="S24.001"/>
<dbReference type="KEGG" id="cby:CLM_1952"/>
<dbReference type="eggNOG" id="COG1974">
    <property type="taxonomic scope" value="Bacteria"/>
</dbReference>
<dbReference type="HOGENOM" id="CLU_066192_45_1_9"/>
<dbReference type="Proteomes" id="UP000001374">
    <property type="component" value="Chromosome"/>
</dbReference>
<dbReference type="GO" id="GO:0003677">
    <property type="term" value="F:DNA binding"/>
    <property type="evidence" value="ECO:0007669"/>
    <property type="project" value="UniProtKB-UniRule"/>
</dbReference>
<dbReference type="GO" id="GO:0004252">
    <property type="term" value="F:serine-type endopeptidase activity"/>
    <property type="evidence" value="ECO:0007669"/>
    <property type="project" value="UniProtKB-UniRule"/>
</dbReference>
<dbReference type="GO" id="GO:0006281">
    <property type="term" value="P:DNA repair"/>
    <property type="evidence" value="ECO:0007669"/>
    <property type="project" value="UniProtKB-UniRule"/>
</dbReference>
<dbReference type="GO" id="GO:0006260">
    <property type="term" value="P:DNA replication"/>
    <property type="evidence" value="ECO:0007669"/>
    <property type="project" value="UniProtKB-UniRule"/>
</dbReference>
<dbReference type="GO" id="GO:0045892">
    <property type="term" value="P:negative regulation of DNA-templated transcription"/>
    <property type="evidence" value="ECO:0007669"/>
    <property type="project" value="UniProtKB-UniRule"/>
</dbReference>
<dbReference type="GO" id="GO:0006508">
    <property type="term" value="P:proteolysis"/>
    <property type="evidence" value="ECO:0007669"/>
    <property type="project" value="InterPro"/>
</dbReference>
<dbReference type="GO" id="GO:0009432">
    <property type="term" value="P:SOS response"/>
    <property type="evidence" value="ECO:0007669"/>
    <property type="project" value="UniProtKB-UniRule"/>
</dbReference>
<dbReference type="CDD" id="cd00090">
    <property type="entry name" value="HTH_ARSR"/>
    <property type="match status" value="1"/>
</dbReference>
<dbReference type="CDD" id="cd06529">
    <property type="entry name" value="S24_LexA-like"/>
    <property type="match status" value="1"/>
</dbReference>
<dbReference type="FunFam" id="1.10.10.10:FF:000009">
    <property type="entry name" value="LexA repressor"/>
    <property type="match status" value="1"/>
</dbReference>
<dbReference type="FunFam" id="2.10.109.10:FF:000001">
    <property type="entry name" value="LexA repressor"/>
    <property type="match status" value="1"/>
</dbReference>
<dbReference type="Gene3D" id="2.10.109.10">
    <property type="entry name" value="Umud Fragment, subunit A"/>
    <property type="match status" value="1"/>
</dbReference>
<dbReference type="Gene3D" id="1.10.10.10">
    <property type="entry name" value="Winged helix-like DNA-binding domain superfamily/Winged helix DNA-binding domain"/>
    <property type="match status" value="1"/>
</dbReference>
<dbReference type="HAMAP" id="MF_00015">
    <property type="entry name" value="LexA"/>
    <property type="match status" value="1"/>
</dbReference>
<dbReference type="InterPro" id="IPR011991">
    <property type="entry name" value="ArsR-like_HTH"/>
</dbReference>
<dbReference type="InterPro" id="IPR006200">
    <property type="entry name" value="LexA"/>
</dbReference>
<dbReference type="InterPro" id="IPR039418">
    <property type="entry name" value="LexA-like"/>
</dbReference>
<dbReference type="InterPro" id="IPR036286">
    <property type="entry name" value="LexA/Signal_pep-like_sf"/>
</dbReference>
<dbReference type="InterPro" id="IPR006199">
    <property type="entry name" value="LexA_DNA-bd_dom"/>
</dbReference>
<dbReference type="InterPro" id="IPR050077">
    <property type="entry name" value="LexA_repressor"/>
</dbReference>
<dbReference type="InterPro" id="IPR006197">
    <property type="entry name" value="Peptidase_S24_LexA"/>
</dbReference>
<dbReference type="InterPro" id="IPR015927">
    <property type="entry name" value="Peptidase_S24_S26A/B/C"/>
</dbReference>
<dbReference type="InterPro" id="IPR036388">
    <property type="entry name" value="WH-like_DNA-bd_sf"/>
</dbReference>
<dbReference type="InterPro" id="IPR036390">
    <property type="entry name" value="WH_DNA-bd_sf"/>
</dbReference>
<dbReference type="NCBIfam" id="TIGR00498">
    <property type="entry name" value="lexA"/>
    <property type="match status" value="1"/>
</dbReference>
<dbReference type="PANTHER" id="PTHR33516">
    <property type="entry name" value="LEXA REPRESSOR"/>
    <property type="match status" value="1"/>
</dbReference>
<dbReference type="PANTHER" id="PTHR33516:SF2">
    <property type="entry name" value="LEXA REPRESSOR-RELATED"/>
    <property type="match status" value="1"/>
</dbReference>
<dbReference type="Pfam" id="PF01726">
    <property type="entry name" value="LexA_DNA_bind"/>
    <property type="match status" value="1"/>
</dbReference>
<dbReference type="Pfam" id="PF00717">
    <property type="entry name" value="Peptidase_S24"/>
    <property type="match status" value="1"/>
</dbReference>
<dbReference type="PRINTS" id="PR00726">
    <property type="entry name" value="LEXASERPTASE"/>
</dbReference>
<dbReference type="SUPFAM" id="SSF51306">
    <property type="entry name" value="LexA/Signal peptidase"/>
    <property type="match status" value="1"/>
</dbReference>
<dbReference type="SUPFAM" id="SSF46785">
    <property type="entry name" value="Winged helix' DNA-binding domain"/>
    <property type="match status" value="1"/>
</dbReference>
<feature type="chain" id="PRO_1000116599" description="LexA repressor">
    <location>
        <begin position="1"/>
        <end position="201"/>
    </location>
</feature>
<feature type="DNA-binding region" description="H-T-H motif" evidence="1">
    <location>
        <begin position="29"/>
        <end position="49"/>
    </location>
</feature>
<feature type="active site" description="For autocatalytic cleavage activity" evidence="1">
    <location>
        <position position="125"/>
    </location>
</feature>
<feature type="active site" description="For autocatalytic cleavage activity" evidence="1">
    <location>
        <position position="162"/>
    </location>
</feature>
<feature type="site" description="Cleavage; by autolysis" evidence="1">
    <location>
        <begin position="89"/>
        <end position="90"/>
    </location>
</feature>
<proteinExistence type="inferred from homology"/>